<proteinExistence type="evidence at protein level"/>
<feature type="chain" id="PRO_0000312115" description="Sodium-coupled neutral amino acid transporter 5">
    <location>
        <begin position="1"/>
        <end position="472"/>
    </location>
</feature>
<feature type="topological domain" description="Cytoplasmic" evidence="1 3">
    <location>
        <begin position="1"/>
        <end position="48"/>
    </location>
</feature>
<feature type="transmembrane region" description="Helical" evidence="3">
    <location>
        <begin position="49"/>
        <end position="71"/>
    </location>
</feature>
<feature type="topological domain" description="Extracellular" evidence="3">
    <location>
        <begin position="72"/>
        <end position="87"/>
    </location>
</feature>
<feature type="transmembrane region" description="Helical" evidence="3">
    <location>
        <begin position="88"/>
        <end position="108"/>
    </location>
</feature>
<feature type="topological domain" description="Cytoplasmic" evidence="3">
    <location>
        <begin position="109"/>
        <end position="125"/>
    </location>
</feature>
<feature type="transmembrane region" description="Helical" evidence="3">
    <location>
        <begin position="126"/>
        <end position="146"/>
    </location>
</feature>
<feature type="topological domain" description="Extracellular" evidence="3">
    <location>
        <begin position="147"/>
        <end position="166"/>
    </location>
</feature>
<feature type="transmembrane region" description="Helical" evidence="3">
    <location>
        <begin position="167"/>
        <end position="187"/>
    </location>
</feature>
<feature type="topological domain" description="Cytoplasmic" evidence="3">
    <location>
        <begin position="188"/>
        <end position="192"/>
    </location>
</feature>
<feature type="transmembrane region" description="Helical" evidence="3">
    <location>
        <begin position="193"/>
        <end position="213"/>
    </location>
</feature>
<feature type="topological domain" description="Extracellular" evidence="3">
    <location>
        <begin position="214"/>
        <end position="257"/>
    </location>
</feature>
<feature type="transmembrane region" description="Helical" evidence="3">
    <location>
        <begin position="258"/>
        <end position="278"/>
    </location>
</feature>
<feature type="topological domain" description="Cytoplasmic" evidence="3">
    <location>
        <begin position="279"/>
        <end position="295"/>
    </location>
</feature>
<feature type="transmembrane region" description="Helical" evidence="3">
    <location>
        <begin position="296"/>
        <end position="316"/>
    </location>
</feature>
<feature type="topological domain" description="Extracellular" evidence="3">
    <location>
        <begin position="317"/>
        <end position="334"/>
    </location>
</feature>
<feature type="transmembrane region" description="Helical" evidence="3">
    <location>
        <begin position="335"/>
        <end position="355"/>
    </location>
</feature>
<feature type="topological domain" description="Cytoplasmic" evidence="3">
    <location>
        <begin position="356"/>
        <end position="376"/>
    </location>
</feature>
<feature type="transmembrane region" description="Helical" evidence="3">
    <location>
        <begin position="377"/>
        <end position="397"/>
    </location>
</feature>
<feature type="topological domain" description="Extracellular" evidence="3">
    <location>
        <begin position="398"/>
        <end position="399"/>
    </location>
</feature>
<feature type="transmembrane region" description="Helical" evidence="3">
    <location>
        <begin position="400"/>
        <end position="420"/>
    </location>
</feature>
<feature type="topological domain" description="Cytoplasmic" evidence="3">
    <location>
        <begin position="421"/>
        <end position="439"/>
    </location>
</feature>
<feature type="transmembrane region" description="Helical" evidence="3">
    <location>
        <begin position="440"/>
        <end position="460"/>
    </location>
</feature>
<feature type="topological domain" description="Extracellular" evidence="3">
    <location>
        <begin position="461"/>
        <end position="472"/>
    </location>
</feature>
<feature type="site" description="Involved in pH-sensing to the transport activity regulation" evidence="1">
    <location>
        <position position="464"/>
    </location>
</feature>
<feature type="modified residue" description="N-acetylmethionine" evidence="10">
    <location>
        <position position="1"/>
    </location>
</feature>
<feature type="glycosylation site" description="N-linked (GlcNAc...) asparagine" evidence="3">
    <location>
        <position position="226"/>
    </location>
</feature>
<feature type="disulfide bond" evidence="4">
    <location>
        <begin position="221"/>
        <end position="247"/>
    </location>
</feature>
<feature type="splice variant" id="VSP_029702" description="In isoform 2." evidence="7">
    <location>
        <begin position="1"/>
        <end position="51"/>
    </location>
</feature>
<feature type="sequence variant" id="VAR_037396" description="In dbSNP:rs17281188." evidence="5">
    <original>M</original>
    <variation>T</variation>
    <location>
        <position position="451"/>
    </location>
</feature>
<feature type="sequence conflict" description="In Ref. 1; AAK61856." evidence="8" ref="1">
    <original>G</original>
    <variation>S</variation>
    <location>
        <position position="456"/>
    </location>
</feature>
<feature type="sequence conflict" description="In Ref. 1; AAK61856." evidence="8" ref="1">
    <original>G</original>
    <variation>S</variation>
    <location>
        <position position="465"/>
    </location>
</feature>
<keyword id="KW-0007">Acetylation</keyword>
<keyword id="KW-0025">Alternative splicing</keyword>
<keyword id="KW-1003">Cell membrane</keyword>
<keyword id="KW-1015">Disulfide bond</keyword>
<keyword id="KW-0325">Glycoprotein</keyword>
<keyword id="KW-0472">Membrane</keyword>
<keyword id="KW-1267">Proteomics identification</keyword>
<keyword id="KW-1185">Reference proteome</keyword>
<keyword id="KW-0812">Transmembrane</keyword>
<keyword id="KW-1133">Transmembrane helix</keyword>
<gene>
    <name type="primary">SLC38A5</name>
    <name type="synonym">JM24</name>
    <name evidence="6" type="synonym">SN2</name>
    <name type="synonym">SNAT5</name>
    <name type="ORF">PP7194</name>
</gene>
<accession>Q8WUX1</accession>
<accession>B3KT20</accession>
<accession>B5MDE6</accession>
<accession>B7WPJ9</accession>
<accession>Q6PIW9</accession>
<accession>Q8WYU2</accession>
<accession>Q96PQ4</accession>
<comment type="function">
    <text evidence="1 2 5">Symporter that cotransports neutral amino acids and sodium ions, coupled to an H(+) antiporter activity (PubMed:11243884). Releases L-glutamine and glycine from astroglial cells and may participate in the glutamate/GABA-L-glutamine cycle and the NMDA receptors activation (By similarity). In addition, contributes significantly to L-glutamine uptake in retina, namely in ganglion and Mueller cells therefore, participates in the retinal glutamate-glutamine cycle (By similarity). The transport activity is pH sensitive and Li(+) tolerant (PubMed:11243884). Moreover functions in both direction and is associated with large uncoupled fluxes of protons (By similarity). The transport is electroneutral coupled to the cotransport of 1 Na(+) and the antiport of 1 H(+) (By similarity). May have a particular importance for modulation of net hepatic glutamine flux (By similarity).</text>
</comment>
<comment type="catalytic activity">
    <reaction evidence="9">
        <text>L-serine(out) + Na(+)(out) + H(+)(in) = L-serine(in) + Na(+)(in) + H(+)(out)</text>
        <dbReference type="Rhea" id="RHEA:71159"/>
        <dbReference type="ChEBI" id="CHEBI:15378"/>
        <dbReference type="ChEBI" id="CHEBI:29101"/>
        <dbReference type="ChEBI" id="CHEBI:33384"/>
    </reaction>
    <physiologicalReaction direction="left-to-right" evidence="9">
        <dbReference type="Rhea" id="RHEA:71160"/>
    </physiologicalReaction>
    <physiologicalReaction direction="right-to-left" evidence="1">
        <dbReference type="Rhea" id="RHEA:71161"/>
    </physiologicalReaction>
</comment>
<comment type="catalytic activity">
    <reaction evidence="9">
        <text>L-alanine(out) + Na(+)(out) + H(+)(in) = L-alanine(in) + Na(+)(in) + H(+)(out)</text>
        <dbReference type="Rhea" id="RHEA:71163"/>
        <dbReference type="ChEBI" id="CHEBI:15378"/>
        <dbReference type="ChEBI" id="CHEBI:29101"/>
        <dbReference type="ChEBI" id="CHEBI:57972"/>
    </reaction>
    <physiologicalReaction direction="left-to-right" evidence="9">
        <dbReference type="Rhea" id="RHEA:71164"/>
    </physiologicalReaction>
    <physiologicalReaction direction="right-to-left" evidence="1">
        <dbReference type="Rhea" id="RHEA:71165"/>
    </physiologicalReaction>
</comment>
<comment type="catalytic activity">
    <reaction evidence="9">
        <text>glycine(out) + Na(+)(out) + H(+)(in) = glycine(in) + Na(+)(in) + H(+)(out)</text>
        <dbReference type="Rhea" id="RHEA:71167"/>
        <dbReference type="ChEBI" id="CHEBI:15378"/>
        <dbReference type="ChEBI" id="CHEBI:29101"/>
        <dbReference type="ChEBI" id="CHEBI:57305"/>
    </reaction>
    <physiologicalReaction direction="left-to-right" evidence="9">
        <dbReference type="Rhea" id="RHEA:71168"/>
    </physiologicalReaction>
    <physiologicalReaction direction="right-to-left" evidence="1">
        <dbReference type="Rhea" id="RHEA:71169"/>
    </physiologicalReaction>
</comment>
<comment type="catalytic activity">
    <reaction evidence="9">
        <text>L-glutamine(out) + Na(+)(out) + H(+)(in) = L-glutamine(in) + Na(+)(in) + H(+)(out)</text>
        <dbReference type="Rhea" id="RHEA:71127"/>
        <dbReference type="ChEBI" id="CHEBI:15378"/>
        <dbReference type="ChEBI" id="CHEBI:29101"/>
        <dbReference type="ChEBI" id="CHEBI:58359"/>
    </reaction>
    <physiologicalReaction direction="left-to-right" evidence="9">
        <dbReference type="Rhea" id="RHEA:71128"/>
    </physiologicalReaction>
    <physiologicalReaction direction="right-to-left" evidence="1">
        <dbReference type="Rhea" id="RHEA:71129"/>
    </physiologicalReaction>
</comment>
<comment type="catalytic activity">
    <reaction evidence="9">
        <text>L-asparagine(out) + Na(+)(out) + H(+)(in) = L-asparagine(in) + Na(+)(in) + H(+)(out)</text>
        <dbReference type="Rhea" id="RHEA:71131"/>
        <dbReference type="ChEBI" id="CHEBI:15378"/>
        <dbReference type="ChEBI" id="CHEBI:29101"/>
        <dbReference type="ChEBI" id="CHEBI:58048"/>
    </reaction>
    <physiologicalReaction direction="left-to-right" evidence="9">
        <dbReference type="Rhea" id="RHEA:71132"/>
    </physiologicalReaction>
    <physiologicalReaction direction="right-to-left" evidence="1">
        <dbReference type="Rhea" id="RHEA:71133"/>
    </physiologicalReaction>
</comment>
<comment type="catalytic activity">
    <reaction evidence="9">
        <text>L-histidine(out) + Na(+)(out) + H(+)(in) = L-histidine(in) + Na(+)(in) + H(+)(out)</text>
        <dbReference type="Rhea" id="RHEA:71135"/>
        <dbReference type="ChEBI" id="CHEBI:15378"/>
        <dbReference type="ChEBI" id="CHEBI:29101"/>
        <dbReference type="ChEBI" id="CHEBI:57595"/>
    </reaction>
    <physiologicalReaction direction="left-to-right" evidence="9">
        <dbReference type="Rhea" id="RHEA:71136"/>
    </physiologicalReaction>
    <physiologicalReaction direction="right-to-left" evidence="1">
        <dbReference type="Rhea" id="RHEA:71137"/>
    </physiologicalReaction>
</comment>
<comment type="catalytic activity">
    <reaction evidence="1">
        <text>L-cysteine(out) + Na(+)(out) + H(+)(in) = L-cysteine(in) + Na(+)(in) + H(+)(out)</text>
        <dbReference type="Rhea" id="RHEA:71171"/>
        <dbReference type="ChEBI" id="CHEBI:15378"/>
        <dbReference type="ChEBI" id="CHEBI:29101"/>
        <dbReference type="ChEBI" id="CHEBI:35235"/>
    </reaction>
    <physiologicalReaction direction="left-to-right" evidence="1">
        <dbReference type="Rhea" id="RHEA:71172"/>
    </physiologicalReaction>
    <physiologicalReaction direction="right-to-left" evidence="1">
        <dbReference type="Rhea" id="RHEA:71173"/>
    </physiologicalReaction>
</comment>
<comment type="activity regulation">
    <text evidence="1 5">Not inhibited by lithium (PubMed:11243884). Partial allosteric regulation on ions sodium binding (By similarity).</text>
</comment>
<comment type="biophysicochemical properties">
    <kinetics>
        <KM evidence="5">0.6 mM for L-histidine (at pH 8.0)</KM>
    </kinetics>
    <phDependence>
        <text evidence="5">Optimum pH is 8.0.</text>
    </phDependence>
</comment>
<comment type="subcellular location">
    <subcellularLocation>
        <location evidence="1">Cell membrane</location>
        <topology evidence="3">Multi-pass membrane protein</topology>
    </subcellularLocation>
    <text evidence="1">Localized at astroglial membrane.</text>
</comment>
<comment type="alternative products">
    <event type="alternative splicing"/>
    <isoform>
        <id>Q8WUX1-1</id>
        <name>1</name>
        <sequence type="displayed"/>
    </isoform>
    <isoform>
        <id>Q8WUX1-2</id>
        <name>2</name>
        <sequence type="described" ref="VSP_029702"/>
    </isoform>
</comment>
<comment type="tissue specificity">
    <text evidence="5">Predominantly expressed in stomach, brain, liver, lung and intestinal tract.</text>
</comment>
<comment type="similarity">
    <text evidence="8">Belongs to the amino acid/polyamine transporter 2 family.</text>
</comment>
<comment type="caution">
    <text evidence="5">Nakanishi et al (PubMed:11243884) shows that the transport process is electrogenic, contrary to the conclusions of Hamdani et al (PMID:11742981) who finds that the transport is electroneutral with a Na(+):L-glutamine stoichiometry of 1:1 (PubMed:11243884). Hamdani et al (PMID:11742981) shows that this electrogenic transport describes by Nakanishi et al. would correspond to large uncoupled fluxes of protons (PubMed:11243884).</text>
</comment>
<comment type="sequence caution" evidence="8">
    <conflict type="frameshift">
        <sequence resource="EMBL-CDS" id="AAL55865"/>
    </conflict>
</comment>
<protein>
    <recommendedName>
        <fullName evidence="8">Sodium-coupled neutral amino acid transporter 5</fullName>
    </recommendedName>
    <alternativeName>
        <fullName>Solute carrier family 38 member 5</fullName>
    </alternativeName>
    <alternativeName>
        <fullName>System N transporter 2</fullName>
    </alternativeName>
</protein>
<organism>
    <name type="scientific">Homo sapiens</name>
    <name type="common">Human</name>
    <dbReference type="NCBI Taxonomy" id="9606"/>
    <lineage>
        <taxon>Eukaryota</taxon>
        <taxon>Metazoa</taxon>
        <taxon>Chordata</taxon>
        <taxon>Craniata</taxon>
        <taxon>Vertebrata</taxon>
        <taxon>Euteleostomi</taxon>
        <taxon>Mammalia</taxon>
        <taxon>Eutheria</taxon>
        <taxon>Euarchontoglires</taxon>
        <taxon>Primates</taxon>
        <taxon>Haplorrhini</taxon>
        <taxon>Catarrhini</taxon>
        <taxon>Hominidae</taxon>
        <taxon>Homo</taxon>
    </lineage>
</organism>
<name>S38A5_HUMAN</name>
<evidence type="ECO:0000250" key="1">
    <source>
        <dbReference type="UniProtKB" id="A2VCW5"/>
    </source>
</evidence>
<evidence type="ECO:0000250" key="2">
    <source>
        <dbReference type="UniProtKB" id="Q3U1J0"/>
    </source>
</evidence>
<evidence type="ECO:0000255" key="3"/>
<evidence type="ECO:0000255" key="4">
    <source>
        <dbReference type="PROSITE-ProRule" id="PRU00114"/>
    </source>
</evidence>
<evidence type="ECO:0000269" key="5">
    <source>
    </source>
</evidence>
<evidence type="ECO:0000303" key="6">
    <source>
    </source>
</evidence>
<evidence type="ECO:0000303" key="7">
    <source>
    </source>
</evidence>
<evidence type="ECO:0000305" key="8"/>
<evidence type="ECO:0000305" key="9">
    <source>
    </source>
</evidence>
<evidence type="ECO:0007744" key="10">
    <source>
    </source>
</evidence>
<reference key="1">
    <citation type="journal article" date="2001" name="Biochem. Biophys. Res. Commun.">
        <title>Structure, function, and tissue expression pattern of human SN2, a subtype of the amino acid transport system N.</title>
        <authorList>
            <person name="Nakanishi T."/>
            <person name="Sugawara M."/>
            <person name="Huang W."/>
            <person name="Martindale R.G."/>
            <person name="Leibach F.H."/>
            <person name="Ganapathy M.E."/>
            <person name="Prasad P.D."/>
            <person name="Ganapathy V."/>
        </authorList>
    </citation>
    <scope>NUCLEOTIDE SEQUENCE [MRNA] (ISOFORM 1)</scope>
    <scope>VARIANT THR-451</scope>
    <scope>FUNCTION</scope>
    <scope>TRANSPORTER ACTIVITY</scope>
    <scope>BIOPHYSICOCHEMICAL PROPERTIES</scope>
    <scope>ACTIVITY REGULATION</scope>
    <scope>TISSUE SPECIFICITY</scope>
    <source>
        <tissue>Hepatoma</tissue>
    </source>
</reference>
<reference key="2">
    <citation type="journal article" date="2004" name="Proc. Natl. Acad. Sci. U.S.A.">
        <title>Large-scale cDNA transfection screening for genes related to cancer development and progression.</title>
        <authorList>
            <person name="Wan D."/>
            <person name="Gong Y."/>
            <person name="Qin W."/>
            <person name="Zhang P."/>
            <person name="Li J."/>
            <person name="Wei L."/>
            <person name="Zhou X."/>
            <person name="Li H."/>
            <person name="Qiu X."/>
            <person name="Zhong F."/>
            <person name="He L."/>
            <person name="Yu J."/>
            <person name="Yao G."/>
            <person name="Jiang H."/>
            <person name="Qian L."/>
            <person name="Yu Y."/>
            <person name="Shu H."/>
            <person name="Chen X."/>
            <person name="Xu H."/>
            <person name="Guo M."/>
            <person name="Pan Z."/>
            <person name="Chen Y."/>
            <person name="Ge C."/>
            <person name="Yang S."/>
            <person name="Gu J."/>
        </authorList>
    </citation>
    <scope>NUCLEOTIDE SEQUENCE [LARGE SCALE MRNA] (ISOFORM 2)</scope>
</reference>
<reference key="3">
    <citation type="journal article" date="2004" name="Nat. Genet.">
        <title>Complete sequencing and characterization of 21,243 full-length human cDNAs.</title>
        <authorList>
            <person name="Ota T."/>
            <person name="Suzuki Y."/>
            <person name="Nishikawa T."/>
            <person name="Otsuki T."/>
            <person name="Sugiyama T."/>
            <person name="Irie R."/>
            <person name="Wakamatsu A."/>
            <person name="Hayashi K."/>
            <person name="Sato H."/>
            <person name="Nagai K."/>
            <person name="Kimura K."/>
            <person name="Makita H."/>
            <person name="Sekine M."/>
            <person name="Obayashi M."/>
            <person name="Nishi T."/>
            <person name="Shibahara T."/>
            <person name="Tanaka T."/>
            <person name="Ishii S."/>
            <person name="Yamamoto J."/>
            <person name="Saito K."/>
            <person name="Kawai Y."/>
            <person name="Isono Y."/>
            <person name="Nakamura Y."/>
            <person name="Nagahari K."/>
            <person name="Murakami K."/>
            <person name="Yasuda T."/>
            <person name="Iwayanagi T."/>
            <person name="Wagatsuma M."/>
            <person name="Shiratori A."/>
            <person name="Sudo H."/>
            <person name="Hosoiri T."/>
            <person name="Kaku Y."/>
            <person name="Kodaira H."/>
            <person name="Kondo H."/>
            <person name="Sugawara M."/>
            <person name="Takahashi M."/>
            <person name="Kanda K."/>
            <person name="Yokoi T."/>
            <person name="Furuya T."/>
            <person name="Kikkawa E."/>
            <person name="Omura Y."/>
            <person name="Abe K."/>
            <person name="Kamihara K."/>
            <person name="Katsuta N."/>
            <person name="Sato K."/>
            <person name="Tanikawa M."/>
            <person name="Yamazaki M."/>
            <person name="Ninomiya K."/>
            <person name="Ishibashi T."/>
            <person name="Yamashita H."/>
            <person name="Murakawa K."/>
            <person name="Fujimori K."/>
            <person name="Tanai H."/>
            <person name="Kimata M."/>
            <person name="Watanabe M."/>
            <person name="Hiraoka S."/>
            <person name="Chiba Y."/>
            <person name="Ishida S."/>
            <person name="Ono Y."/>
            <person name="Takiguchi S."/>
            <person name="Watanabe S."/>
            <person name="Yosida M."/>
            <person name="Hotuta T."/>
            <person name="Kusano J."/>
            <person name="Kanehori K."/>
            <person name="Takahashi-Fujii A."/>
            <person name="Hara H."/>
            <person name="Tanase T.-O."/>
            <person name="Nomura Y."/>
            <person name="Togiya S."/>
            <person name="Komai F."/>
            <person name="Hara R."/>
            <person name="Takeuchi K."/>
            <person name="Arita M."/>
            <person name="Imose N."/>
            <person name="Musashino K."/>
            <person name="Yuuki H."/>
            <person name="Oshima A."/>
            <person name="Sasaki N."/>
            <person name="Aotsuka S."/>
            <person name="Yoshikawa Y."/>
            <person name="Matsunawa H."/>
            <person name="Ichihara T."/>
            <person name="Shiohata N."/>
            <person name="Sano S."/>
            <person name="Moriya S."/>
            <person name="Momiyama H."/>
            <person name="Satoh N."/>
            <person name="Takami S."/>
            <person name="Terashima Y."/>
            <person name="Suzuki O."/>
            <person name="Nakagawa S."/>
            <person name="Senoh A."/>
            <person name="Mizoguchi H."/>
            <person name="Goto Y."/>
            <person name="Shimizu F."/>
            <person name="Wakebe H."/>
            <person name="Hishigaki H."/>
            <person name="Watanabe T."/>
            <person name="Sugiyama A."/>
            <person name="Takemoto M."/>
            <person name="Kawakami B."/>
            <person name="Yamazaki M."/>
            <person name="Watanabe K."/>
            <person name="Kumagai A."/>
            <person name="Itakura S."/>
            <person name="Fukuzumi Y."/>
            <person name="Fujimori Y."/>
            <person name="Komiyama M."/>
            <person name="Tashiro H."/>
            <person name="Tanigami A."/>
            <person name="Fujiwara T."/>
            <person name="Ono T."/>
            <person name="Yamada K."/>
            <person name="Fujii Y."/>
            <person name="Ozaki K."/>
            <person name="Hirao M."/>
            <person name="Ohmori Y."/>
            <person name="Kawabata A."/>
            <person name="Hikiji T."/>
            <person name="Kobatake N."/>
            <person name="Inagaki H."/>
            <person name="Ikema Y."/>
            <person name="Okamoto S."/>
            <person name="Okitani R."/>
            <person name="Kawakami T."/>
            <person name="Noguchi S."/>
            <person name="Itoh T."/>
            <person name="Shigeta K."/>
            <person name="Senba T."/>
            <person name="Matsumura K."/>
            <person name="Nakajima Y."/>
            <person name="Mizuno T."/>
            <person name="Morinaga M."/>
            <person name="Sasaki M."/>
            <person name="Togashi T."/>
            <person name="Oyama M."/>
            <person name="Hata H."/>
            <person name="Watanabe M."/>
            <person name="Komatsu T."/>
            <person name="Mizushima-Sugano J."/>
            <person name="Satoh T."/>
            <person name="Shirai Y."/>
            <person name="Takahashi Y."/>
            <person name="Nakagawa K."/>
            <person name="Okumura K."/>
            <person name="Nagase T."/>
            <person name="Nomura N."/>
            <person name="Kikuchi H."/>
            <person name="Masuho Y."/>
            <person name="Yamashita R."/>
            <person name="Nakai K."/>
            <person name="Yada T."/>
            <person name="Nakamura Y."/>
            <person name="Ohara O."/>
            <person name="Isogai T."/>
            <person name="Sugano S."/>
        </authorList>
    </citation>
    <scope>NUCLEOTIDE SEQUENCE [LARGE SCALE MRNA] (ISOFORM 1)</scope>
    <source>
        <tissue>Brain</tissue>
    </source>
</reference>
<reference key="4">
    <citation type="submission" date="2005-07" db="EMBL/GenBank/DDBJ databases">
        <authorList>
            <person name="Mural R.J."/>
            <person name="Istrail S."/>
            <person name="Sutton G.G."/>
            <person name="Florea L."/>
            <person name="Halpern A.L."/>
            <person name="Mobarry C.M."/>
            <person name="Lippert R."/>
            <person name="Walenz B."/>
            <person name="Shatkay H."/>
            <person name="Dew I."/>
            <person name="Miller J.R."/>
            <person name="Flanigan M.J."/>
            <person name="Edwards N.J."/>
            <person name="Bolanos R."/>
            <person name="Fasulo D."/>
            <person name="Halldorsson B.V."/>
            <person name="Hannenhalli S."/>
            <person name="Turner R."/>
            <person name="Yooseph S."/>
            <person name="Lu F."/>
            <person name="Nusskern D.R."/>
            <person name="Shue B.C."/>
            <person name="Zheng X.H."/>
            <person name="Zhong F."/>
            <person name="Delcher A.L."/>
            <person name="Huson D.H."/>
            <person name="Kravitz S.A."/>
            <person name="Mouchard L."/>
            <person name="Reinert K."/>
            <person name="Remington K.A."/>
            <person name="Clark A.G."/>
            <person name="Waterman M.S."/>
            <person name="Eichler E.E."/>
            <person name="Adams M.D."/>
            <person name="Hunkapiller M.W."/>
            <person name="Myers E.W."/>
            <person name="Venter J.C."/>
        </authorList>
    </citation>
    <scope>NUCLEOTIDE SEQUENCE [LARGE SCALE GENOMIC DNA]</scope>
</reference>
<reference key="5">
    <citation type="journal article" date="2005" name="Nature">
        <title>The DNA sequence of the human X chromosome.</title>
        <authorList>
            <person name="Ross M.T."/>
            <person name="Grafham D.V."/>
            <person name="Coffey A.J."/>
            <person name="Scherer S."/>
            <person name="McLay K."/>
            <person name="Muzny D."/>
            <person name="Platzer M."/>
            <person name="Howell G.R."/>
            <person name="Burrows C."/>
            <person name="Bird C.P."/>
            <person name="Frankish A."/>
            <person name="Lovell F.L."/>
            <person name="Howe K.L."/>
            <person name="Ashurst J.L."/>
            <person name="Fulton R.S."/>
            <person name="Sudbrak R."/>
            <person name="Wen G."/>
            <person name="Jones M.C."/>
            <person name="Hurles M.E."/>
            <person name="Andrews T.D."/>
            <person name="Scott C.E."/>
            <person name="Searle S."/>
            <person name="Ramser J."/>
            <person name="Whittaker A."/>
            <person name="Deadman R."/>
            <person name="Carter N.P."/>
            <person name="Hunt S.E."/>
            <person name="Chen R."/>
            <person name="Cree A."/>
            <person name="Gunaratne P."/>
            <person name="Havlak P."/>
            <person name="Hodgson A."/>
            <person name="Metzker M.L."/>
            <person name="Richards S."/>
            <person name="Scott G."/>
            <person name="Steffen D."/>
            <person name="Sodergren E."/>
            <person name="Wheeler D.A."/>
            <person name="Worley K.C."/>
            <person name="Ainscough R."/>
            <person name="Ambrose K.D."/>
            <person name="Ansari-Lari M.A."/>
            <person name="Aradhya S."/>
            <person name="Ashwell R.I."/>
            <person name="Babbage A.K."/>
            <person name="Bagguley C.L."/>
            <person name="Ballabio A."/>
            <person name="Banerjee R."/>
            <person name="Barker G.E."/>
            <person name="Barlow K.F."/>
            <person name="Barrett I.P."/>
            <person name="Bates K.N."/>
            <person name="Beare D.M."/>
            <person name="Beasley H."/>
            <person name="Beasley O."/>
            <person name="Beck A."/>
            <person name="Bethel G."/>
            <person name="Blechschmidt K."/>
            <person name="Brady N."/>
            <person name="Bray-Allen S."/>
            <person name="Bridgeman A.M."/>
            <person name="Brown A.J."/>
            <person name="Brown M.J."/>
            <person name="Bonnin D."/>
            <person name="Bruford E.A."/>
            <person name="Buhay C."/>
            <person name="Burch P."/>
            <person name="Burford D."/>
            <person name="Burgess J."/>
            <person name="Burrill W."/>
            <person name="Burton J."/>
            <person name="Bye J.M."/>
            <person name="Carder C."/>
            <person name="Carrel L."/>
            <person name="Chako J."/>
            <person name="Chapman J.C."/>
            <person name="Chavez D."/>
            <person name="Chen E."/>
            <person name="Chen G."/>
            <person name="Chen Y."/>
            <person name="Chen Z."/>
            <person name="Chinault C."/>
            <person name="Ciccodicola A."/>
            <person name="Clark S.Y."/>
            <person name="Clarke G."/>
            <person name="Clee C.M."/>
            <person name="Clegg S."/>
            <person name="Clerc-Blankenburg K."/>
            <person name="Clifford K."/>
            <person name="Cobley V."/>
            <person name="Cole C.G."/>
            <person name="Conquer J.S."/>
            <person name="Corby N."/>
            <person name="Connor R.E."/>
            <person name="David R."/>
            <person name="Davies J."/>
            <person name="Davis C."/>
            <person name="Davis J."/>
            <person name="Delgado O."/>
            <person name="Deshazo D."/>
            <person name="Dhami P."/>
            <person name="Ding Y."/>
            <person name="Dinh H."/>
            <person name="Dodsworth S."/>
            <person name="Draper H."/>
            <person name="Dugan-Rocha S."/>
            <person name="Dunham A."/>
            <person name="Dunn M."/>
            <person name="Durbin K.J."/>
            <person name="Dutta I."/>
            <person name="Eades T."/>
            <person name="Ellwood M."/>
            <person name="Emery-Cohen A."/>
            <person name="Errington H."/>
            <person name="Evans K.L."/>
            <person name="Faulkner L."/>
            <person name="Francis F."/>
            <person name="Frankland J."/>
            <person name="Fraser A.E."/>
            <person name="Galgoczy P."/>
            <person name="Gilbert J."/>
            <person name="Gill R."/>
            <person name="Gloeckner G."/>
            <person name="Gregory S.G."/>
            <person name="Gribble S."/>
            <person name="Griffiths C."/>
            <person name="Grocock R."/>
            <person name="Gu Y."/>
            <person name="Gwilliam R."/>
            <person name="Hamilton C."/>
            <person name="Hart E.A."/>
            <person name="Hawes A."/>
            <person name="Heath P.D."/>
            <person name="Heitmann K."/>
            <person name="Hennig S."/>
            <person name="Hernandez J."/>
            <person name="Hinzmann B."/>
            <person name="Ho S."/>
            <person name="Hoffs M."/>
            <person name="Howden P.J."/>
            <person name="Huckle E.J."/>
            <person name="Hume J."/>
            <person name="Hunt P.J."/>
            <person name="Hunt A.R."/>
            <person name="Isherwood J."/>
            <person name="Jacob L."/>
            <person name="Johnson D."/>
            <person name="Jones S."/>
            <person name="de Jong P.J."/>
            <person name="Joseph S.S."/>
            <person name="Keenan S."/>
            <person name="Kelly S."/>
            <person name="Kershaw J.K."/>
            <person name="Khan Z."/>
            <person name="Kioschis P."/>
            <person name="Klages S."/>
            <person name="Knights A.J."/>
            <person name="Kosiura A."/>
            <person name="Kovar-Smith C."/>
            <person name="Laird G.K."/>
            <person name="Langford C."/>
            <person name="Lawlor S."/>
            <person name="Leversha M."/>
            <person name="Lewis L."/>
            <person name="Liu W."/>
            <person name="Lloyd C."/>
            <person name="Lloyd D.M."/>
            <person name="Loulseged H."/>
            <person name="Loveland J.E."/>
            <person name="Lovell J.D."/>
            <person name="Lozado R."/>
            <person name="Lu J."/>
            <person name="Lyne R."/>
            <person name="Ma J."/>
            <person name="Maheshwari M."/>
            <person name="Matthews L.H."/>
            <person name="McDowall J."/>
            <person name="McLaren S."/>
            <person name="McMurray A."/>
            <person name="Meidl P."/>
            <person name="Meitinger T."/>
            <person name="Milne S."/>
            <person name="Miner G."/>
            <person name="Mistry S.L."/>
            <person name="Morgan M."/>
            <person name="Morris S."/>
            <person name="Mueller I."/>
            <person name="Mullikin J.C."/>
            <person name="Nguyen N."/>
            <person name="Nordsiek G."/>
            <person name="Nyakatura G."/>
            <person name="O'dell C.N."/>
            <person name="Okwuonu G."/>
            <person name="Palmer S."/>
            <person name="Pandian R."/>
            <person name="Parker D."/>
            <person name="Parrish J."/>
            <person name="Pasternak S."/>
            <person name="Patel D."/>
            <person name="Pearce A.V."/>
            <person name="Pearson D.M."/>
            <person name="Pelan S.E."/>
            <person name="Perez L."/>
            <person name="Porter K.M."/>
            <person name="Ramsey Y."/>
            <person name="Reichwald K."/>
            <person name="Rhodes S."/>
            <person name="Ridler K.A."/>
            <person name="Schlessinger D."/>
            <person name="Schueler M.G."/>
            <person name="Sehra H.K."/>
            <person name="Shaw-Smith C."/>
            <person name="Shen H."/>
            <person name="Sheridan E.M."/>
            <person name="Shownkeen R."/>
            <person name="Skuce C.D."/>
            <person name="Smith M.L."/>
            <person name="Sotheran E.C."/>
            <person name="Steingruber H.E."/>
            <person name="Steward C.A."/>
            <person name="Storey R."/>
            <person name="Swann R.M."/>
            <person name="Swarbreck D."/>
            <person name="Tabor P.E."/>
            <person name="Taudien S."/>
            <person name="Taylor T."/>
            <person name="Teague B."/>
            <person name="Thomas K."/>
            <person name="Thorpe A."/>
            <person name="Timms K."/>
            <person name="Tracey A."/>
            <person name="Trevanion S."/>
            <person name="Tromans A.C."/>
            <person name="d'Urso M."/>
            <person name="Verduzco D."/>
            <person name="Villasana D."/>
            <person name="Waldron L."/>
            <person name="Wall M."/>
            <person name="Wang Q."/>
            <person name="Warren J."/>
            <person name="Warry G.L."/>
            <person name="Wei X."/>
            <person name="West A."/>
            <person name="Whitehead S.L."/>
            <person name="Whiteley M.N."/>
            <person name="Wilkinson J.E."/>
            <person name="Willey D.L."/>
            <person name="Williams G."/>
            <person name="Williams L."/>
            <person name="Williamson A."/>
            <person name="Williamson H."/>
            <person name="Wilming L."/>
            <person name="Woodmansey R.L."/>
            <person name="Wray P.W."/>
            <person name="Yen J."/>
            <person name="Zhang J."/>
            <person name="Zhou J."/>
            <person name="Zoghbi H."/>
            <person name="Zorilla S."/>
            <person name="Buck D."/>
            <person name="Reinhardt R."/>
            <person name="Poustka A."/>
            <person name="Rosenthal A."/>
            <person name="Lehrach H."/>
            <person name="Meindl A."/>
            <person name="Minx P.J."/>
            <person name="Hillier L.W."/>
            <person name="Willard H.F."/>
            <person name="Wilson R.K."/>
            <person name="Waterston R.H."/>
            <person name="Rice C.M."/>
            <person name="Vaudin M."/>
            <person name="Coulson A."/>
            <person name="Nelson D.L."/>
            <person name="Weinstock G."/>
            <person name="Sulston J.E."/>
            <person name="Durbin R.M."/>
            <person name="Hubbard T."/>
            <person name="Gibbs R.A."/>
            <person name="Beck S."/>
            <person name="Rogers J."/>
            <person name="Bentley D.R."/>
        </authorList>
    </citation>
    <scope>NUCLEOTIDE SEQUENCE [LARGE SCALE GENOMIC DNA]</scope>
</reference>
<reference key="6">
    <citation type="journal article" date="2004" name="Genome Res.">
        <title>The status, quality, and expansion of the NIH full-length cDNA project: the Mammalian Gene Collection (MGC).</title>
        <authorList>
            <consortium name="The MGC Project Team"/>
        </authorList>
    </citation>
    <scope>NUCLEOTIDE SEQUENCE [LARGE SCALE MRNA] (ISOFORM 1)</scope>
    <source>
        <tissue>Eye</tissue>
        <tissue>Kidney</tissue>
    </source>
</reference>
<reference key="7">
    <citation type="journal article" date="2012" name="Proc. Natl. Acad. Sci. U.S.A.">
        <title>N-terminal acetylome analyses and functional insights of the N-terminal acetyltransferase NatB.</title>
        <authorList>
            <person name="Van Damme P."/>
            <person name="Lasa M."/>
            <person name="Polevoda B."/>
            <person name="Gazquez C."/>
            <person name="Elosegui-Artola A."/>
            <person name="Kim D.S."/>
            <person name="De Juan-Pardo E."/>
            <person name="Demeyer K."/>
            <person name="Hole K."/>
            <person name="Larrea E."/>
            <person name="Timmerman E."/>
            <person name="Prieto J."/>
            <person name="Arnesen T."/>
            <person name="Sherman F."/>
            <person name="Gevaert K."/>
            <person name="Aldabe R."/>
        </authorList>
    </citation>
    <scope>ACETYLATION [LARGE SCALE ANALYSIS] AT MET-1</scope>
    <scope>IDENTIFICATION BY MASS SPECTROMETRY [LARGE SCALE ANALYSIS]</scope>
</reference>
<dbReference type="EMBL" id="AF276889">
    <property type="protein sequence ID" value="AAK61856.1"/>
    <property type="molecule type" value="mRNA"/>
</dbReference>
<dbReference type="EMBL" id="AF318358">
    <property type="protein sequence ID" value="AAL55865.1"/>
    <property type="status" value="ALT_FRAME"/>
    <property type="molecule type" value="mRNA"/>
</dbReference>
<dbReference type="EMBL" id="AK094788">
    <property type="protein sequence ID" value="BAG52932.1"/>
    <property type="molecule type" value="mRNA"/>
</dbReference>
<dbReference type="EMBL" id="CH471224">
    <property type="protein sequence ID" value="EAW50785.1"/>
    <property type="molecule type" value="Genomic_DNA"/>
</dbReference>
<dbReference type="EMBL" id="AF196972">
    <property type="status" value="NOT_ANNOTATED_CDS"/>
    <property type="molecule type" value="Genomic_DNA"/>
</dbReference>
<dbReference type="EMBL" id="BC019246">
    <property type="protein sequence ID" value="AAH19246.1"/>
    <property type="molecule type" value="mRNA"/>
</dbReference>
<dbReference type="EMBL" id="BC027721">
    <property type="protein sequence ID" value="AAH27721.1"/>
    <property type="molecule type" value="mRNA"/>
</dbReference>
<dbReference type="CCDS" id="CCDS14293.1">
    <molecule id="Q8WUX1-1"/>
</dbReference>
<dbReference type="PIR" id="JC7626">
    <property type="entry name" value="JC7626"/>
</dbReference>
<dbReference type="RefSeq" id="NP_277053.2">
    <molecule id="Q8WUX1-1"/>
    <property type="nucleotide sequence ID" value="NM_033518.4"/>
</dbReference>
<dbReference type="RefSeq" id="XP_016885450.1">
    <molecule id="Q8WUX1-1"/>
    <property type="nucleotide sequence ID" value="XM_017029961.3"/>
</dbReference>
<dbReference type="RefSeq" id="XP_054184100.1">
    <molecule id="Q8WUX1-1"/>
    <property type="nucleotide sequence ID" value="XM_054328125.1"/>
</dbReference>
<dbReference type="SMR" id="Q8WUX1"/>
<dbReference type="BioGRID" id="124974">
    <property type="interactions" value="48"/>
</dbReference>
<dbReference type="FunCoup" id="Q8WUX1">
    <property type="interactions" value="381"/>
</dbReference>
<dbReference type="IntAct" id="Q8WUX1">
    <property type="interactions" value="25"/>
</dbReference>
<dbReference type="MINT" id="Q8WUX1"/>
<dbReference type="STRING" id="9606.ENSP00000471683"/>
<dbReference type="TCDB" id="2.A.18.6.15">
    <property type="family name" value="the amino acid/auxin permease (aaap) family"/>
</dbReference>
<dbReference type="GlyCosmos" id="Q8WUX1">
    <property type="glycosylation" value="1 site, No reported glycans"/>
</dbReference>
<dbReference type="GlyGen" id="Q8WUX1">
    <property type="glycosylation" value="2 sites"/>
</dbReference>
<dbReference type="iPTMnet" id="Q8WUX1"/>
<dbReference type="PhosphoSitePlus" id="Q8WUX1"/>
<dbReference type="SwissPalm" id="Q8WUX1"/>
<dbReference type="BioMuta" id="SLC38A5"/>
<dbReference type="DMDM" id="74730778"/>
<dbReference type="jPOST" id="Q8WUX1"/>
<dbReference type="MassIVE" id="Q8WUX1"/>
<dbReference type="PaxDb" id="9606-ENSP00000471683"/>
<dbReference type="PeptideAtlas" id="Q8WUX1"/>
<dbReference type="ProteomicsDB" id="74716">
    <molecule id="Q8WUX1-1"/>
</dbReference>
<dbReference type="ProteomicsDB" id="74717">
    <molecule id="Q8WUX1-2"/>
</dbReference>
<dbReference type="Pumba" id="Q8WUX1"/>
<dbReference type="Antibodypedia" id="43079">
    <property type="antibodies" value="93 antibodies from 16 providers"/>
</dbReference>
<dbReference type="DNASU" id="92745"/>
<dbReference type="Ensembl" id="ENST00000595796.5">
    <molecule id="Q8WUX1-1"/>
    <property type="protein sequence ID" value="ENSP00000471683.1"/>
    <property type="gene ID" value="ENSG00000017483.16"/>
</dbReference>
<dbReference type="Ensembl" id="ENST00000619100.4">
    <molecule id="Q8WUX1-2"/>
    <property type="protein sequence ID" value="ENSP00000478807.1"/>
    <property type="gene ID" value="ENSG00000017483.16"/>
</dbReference>
<dbReference type="Ensembl" id="ENST00000620913.5">
    <molecule id="Q8WUX1-1"/>
    <property type="protein sequence ID" value="ENSP00000481291.1"/>
    <property type="gene ID" value="ENSG00000017483.16"/>
</dbReference>
<dbReference type="GeneID" id="92745"/>
<dbReference type="KEGG" id="hsa:92745"/>
<dbReference type="MANE-Select" id="ENST00000620913.5">
    <property type="protein sequence ID" value="ENSP00000481291.1"/>
    <property type="RefSeq nucleotide sequence ID" value="NM_033518.4"/>
    <property type="RefSeq protein sequence ID" value="NP_277053.2"/>
</dbReference>
<dbReference type="UCSC" id="uc033ecl.2">
    <molecule id="Q8WUX1-1"/>
    <property type="organism name" value="human"/>
</dbReference>
<dbReference type="AGR" id="HGNC:18070"/>
<dbReference type="CTD" id="92745"/>
<dbReference type="DisGeNET" id="92745"/>
<dbReference type="GeneCards" id="SLC38A5"/>
<dbReference type="HGNC" id="HGNC:18070">
    <property type="gene designation" value="SLC38A5"/>
</dbReference>
<dbReference type="HPA" id="ENSG00000017483">
    <property type="expression patterns" value="Tissue enriched (pancreas)"/>
</dbReference>
<dbReference type="MIM" id="300649">
    <property type="type" value="gene"/>
</dbReference>
<dbReference type="neXtProt" id="NX_Q8WUX1"/>
<dbReference type="OpenTargets" id="ENSG00000017483"/>
<dbReference type="PharmGKB" id="PA38289"/>
<dbReference type="VEuPathDB" id="HostDB:ENSG00000017483"/>
<dbReference type="eggNOG" id="KOG1305">
    <property type="taxonomic scope" value="Eukaryota"/>
</dbReference>
<dbReference type="GeneTree" id="ENSGT00940000161233"/>
<dbReference type="HOGENOM" id="CLU_009020_0_2_1"/>
<dbReference type="InParanoid" id="Q8WUX1"/>
<dbReference type="OMA" id="FGCARFG"/>
<dbReference type="OrthoDB" id="655540at2759"/>
<dbReference type="PAN-GO" id="Q8WUX1">
    <property type="GO annotations" value="7 GO annotations based on evolutionary models"/>
</dbReference>
<dbReference type="PhylomeDB" id="Q8WUX1"/>
<dbReference type="TreeFam" id="TF328787"/>
<dbReference type="PathwayCommons" id="Q8WUX1"/>
<dbReference type="Reactome" id="R-HSA-352230">
    <property type="pathway name" value="Amino acid transport across the plasma membrane"/>
</dbReference>
<dbReference type="SignaLink" id="Q8WUX1"/>
<dbReference type="BioGRID-ORCS" id="92745">
    <property type="hits" value="18 hits in 786 CRISPR screens"/>
</dbReference>
<dbReference type="ChiTaRS" id="SLC38A5">
    <property type="organism name" value="human"/>
</dbReference>
<dbReference type="GenomeRNAi" id="92745"/>
<dbReference type="Pharos" id="Q8WUX1">
    <property type="development level" value="Tbio"/>
</dbReference>
<dbReference type="PRO" id="PR:Q8WUX1"/>
<dbReference type="Proteomes" id="UP000005640">
    <property type="component" value="Chromosome X"/>
</dbReference>
<dbReference type="RNAct" id="Q8WUX1">
    <property type="molecule type" value="protein"/>
</dbReference>
<dbReference type="Bgee" id="ENSG00000017483">
    <property type="expression patterns" value="Expressed in body of pancreas and 122 other cell types or tissues"/>
</dbReference>
<dbReference type="ExpressionAtlas" id="Q8WUX1">
    <property type="expression patterns" value="baseline and differential"/>
</dbReference>
<dbReference type="GO" id="GO:0005886">
    <property type="term" value="C:plasma membrane"/>
    <property type="evidence" value="ECO:0000250"/>
    <property type="project" value="UniProtKB"/>
</dbReference>
<dbReference type="GO" id="GO:0022858">
    <property type="term" value="F:alanine transmembrane transporter activity"/>
    <property type="evidence" value="ECO:0000315"/>
    <property type="project" value="ARUK-UCL"/>
</dbReference>
<dbReference type="GO" id="GO:0015171">
    <property type="term" value="F:amino acid transmembrane transporter activity"/>
    <property type="evidence" value="ECO:0000304"/>
    <property type="project" value="Reactome"/>
</dbReference>
<dbReference type="GO" id="GO:0015187">
    <property type="term" value="F:glycine transmembrane transporter activity"/>
    <property type="evidence" value="ECO:0000315"/>
    <property type="project" value="ARUK-UCL"/>
</dbReference>
<dbReference type="GO" id="GO:0015182">
    <property type="term" value="F:L-asparagine transmembrane transporter activity"/>
    <property type="evidence" value="ECO:0000315"/>
    <property type="project" value="ARUK-UCL"/>
</dbReference>
<dbReference type="GO" id="GO:0015186">
    <property type="term" value="F:L-glutamine transmembrane transporter activity"/>
    <property type="evidence" value="ECO:0000315"/>
    <property type="project" value="ARUK-UCL"/>
</dbReference>
<dbReference type="GO" id="GO:0140830">
    <property type="term" value="F:L-glutamine, sodium:proton antiporter activity"/>
    <property type="evidence" value="ECO:0000250"/>
    <property type="project" value="UniProtKB"/>
</dbReference>
<dbReference type="GO" id="GO:0005290">
    <property type="term" value="F:L-histidine transmembrane transporter activity"/>
    <property type="evidence" value="ECO:0000315"/>
    <property type="project" value="ARUK-UCL"/>
</dbReference>
<dbReference type="GO" id="GO:0015194">
    <property type="term" value="F:L-serine transmembrane transporter activity"/>
    <property type="evidence" value="ECO:0000315"/>
    <property type="project" value="ARUK-UCL"/>
</dbReference>
<dbReference type="GO" id="GO:0140893">
    <property type="term" value="F:neutral amino acid, sodium:proton antiporter activity"/>
    <property type="evidence" value="ECO:0000314"/>
    <property type="project" value="UniProtKB"/>
</dbReference>
<dbReference type="GO" id="GO:0032973">
    <property type="term" value="P:amino acid export across plasma membrane"/>
    <property type="evidence" value="ECO:0000250"/>
    <property type="project" value="UniProtKB"/>
</dbReference>
<dbReference type="GO" id="GO:0089718">
    <property type="term" value="P:amino acid import across plasma membrane"/>
    <property type="evidence" value="ECO:0000250"/>
    <property type="project" value="UniProtKB"/>
</dbReference>
<dbReference type="GO" id="GO:0006865">
    <property type="term" value="P:amino acid transport"/>
    <property type="evidence" value="ECO:0000304"/>
    <property type="project" value="Reactome"/>
</dbReference>
<dbReference type="GO" id="GO:1903713">
    <property type="term" value="P:asparagine transmembrane transport"/>
    <property type="evidence" value="ECO:0000315"/>
    <property type="project" value="ARUK-UCL"/>
</dbReference>
<dbReference type="GO" id="GO:0006868">
    <property type="term" value="P:glutamine transport"/>
    <property type="evidence" value="ECO:0000315"/>
    <property type="project" value="ARUK-UCL"/>
</dbReference>
<dbReference type="GO" id="GO:0015816">
    <property type="term" value="P:glycine transport"/>
    <property type="evidence" value="ECO:0000315"/>
    <property type="project" value="ARUK-UCL"/>
</dbReference>
<dbReference type="GO" id="GO:1904557">
    <property type="term" value="P:L-alanine transmembrane transport"/>
    <property type="evidence" value="ECO:0000315"/>
    <property type="project" value="ARUK-UCL"/>
</dbReference>
<dbReference type="GO" id="GO:1903803">
    <property type="term" value="P:L-glutamine import across plasma membrane"/>
    <property type="evidence" value="ECO:0000250"/>
    <property type="project" value="UniProtKB"/>
</dbReference>
<dbReference type="GO" id="GO:0089709">
    <property type="term" value="P:L-histidine transmembrane transport"/>
    <property type="evidence" value="ECO:0000315"/>
    <property type="project" value="ARUK-UCL"/>
</dbReference>
<dbReference type="GO" id="GO:1903812">
    <property type="term" value="P:L-serine import across plasma membrane"/>
    <property type="evidence" value="ECO:0000250"/>
    <property type="project" value="UniProtKB"/>
</dbReference>
<dbReference type="GO" id="GO:0015825">
    <property type="term" value="P:L-serine transport"/>
    <property type="evidence" value="ECO:0000250"/>
    <property type="project" value="ARUK-UCL"/>
</dbReference>
<dbReference type="GO" id="GO:0015804">
    <property type="term" value="P:neutral amino acid transport"/>
    <property type="evidence" value="ECO:0000314"/>
    <property type="project" value="UniProtKB"/>
</dbReference>
<dbReference type="GO" id="GO:0032329">
    <property type="term" value="P:serine transport"/>
    <property type="evidence" value="ECO:0000315"/>
    <property type="project" value="ARUK-UCL"/>
</dbReference>
<dbReference type="GO" id="GO:0150104">
    <property type="term" value="P:transport across blood-brain barrier"/>
    <property type="evidence" value="ECO:0000303"/>
    <property type="project" value="ARUK-UCL"/>
</dbReference>
<dbReference type="InterPro" id="IPR013057">
    <property type="entry name" value="AA_transpt_TM"/>
</dbReference>
<dbReference type="PANTHER" id="PTHR22950">
    <property type="entry name" value="AMINO ACID TRANSPORTER"/>
    <property type="match status" value="1"/>
</dbReference>
<dbReference type="PANTHER" id="PTHR22950:SF74">
    <property type="entry name" value="SODIUM-COUPLED NEUTRAL AMINO ACID TRANSPORTER 5"/>
    <property type="match status" value="1"/>
</dbReference>
<dbReference type="Pfam" id="PF01490">
    <property type="entry name" value="Aa_trans"/>
    <property type="match status" value="1"/>
</dbReference>
<sequence>MELQDPKMNGALPSDAVGYRQEREGFLPSRGPAPGSKPVQFMDFEGKTSFGMSVFNLSNAIMGSGILGLAYAMAHTGVIFFLALLLCIALLSSYSIHLLLTCAGIAGIRAYEQLGQRAFGPAGKVVVATVICLHNVGAMSSYLFIIKSELPLVIGTFLYMDPEGDWFLKGNLLIIIVSVLIILPLALMKHLGYLGYTSGLSLTCMLFFLVSVIYKKFQLGCAIGHNETAMESEALVGLPSQGLNSSCEAQMFTVDSQMSYTVPIMAFAFVCHPEVLPIYTELCRPSKRRMQAVANVSIGAMFCMYGLTATFGYLTFYSSVKAEMLHMYSQKDPLILCVRLAVLLAVTLTVPVVLFPIRRALQQLLFPGKAFSWPRHVAIALILLVLVNVLVICVPTIRDIFGVIGSTSAPSLIFILPSIFYLRIVPSEVEPFLSWPKIQALCFGVLGVLFMAVSLGFMFANWATGQSRMSGH</sequence>